<dbReference type="EMBL" id="CU651583">
    <property type="status" value="NOT_ANNOTATED_CDS"/>
    <property type="molecule type" value="Genomic_DNA"/>
</dbReference>
<dbReference type="RefSeq" id="NP_001410962.1">
    <property type="nucleotide sequence ID" value="NM_001424033.1"/>
</dbReference>
<dbReference type="RefSeq" id="XP_001341229.1">
    <property type="nucleotide sequence ID" value="XM_001341193.6"/>
</dbReference>
<dbReference type="FunCoup" id="E7F594">
    <property type="interactions" value="937"/>
</dbReference>
<dbReference type="STRING" id="7955.ENSDARP00000037177"/>
<dbReference type="PaxDb" id="7955-ENSDARP00000037177"/>
<dbReference type="Ensembl" id="ENSDART00000031858">
    <property type="protein sequence ID" value="ENSDARP00000037177"/>
    <property type="gene ID" value="ENSDARG00000078448"/>
</dbReference>
<dbReference type="GeneID" id="100001171"/>
<dbReference type="AGR" id="ZFIN:ZDB-GENE-100721-1"/>
<dbReference type="ZFIN" id="ZDB-GENE-100721-1">
    <property type="gene designation" value="gpr137ba"/>
</dbReference>
<dbReference type="eggNOG" id="ENOG502QQ83">
    <property type="taxonomic scope" value="Eukaryota"/>
</dbReference>
<dbReference type="HOGENOM" id="CLU_050057_0_0_1"/>
<dbReference type="InParanoid" id="E7F594"/>
<dbReference type="OMA" id="DPQRYDS"/>
<dbReference type="OrthoDB" id="192544at2759"/>
<dbReference type="PhylomeDB" id="E7F594"/>
<dbReference type="TreeFam" id="TF329003"/>
<dbReference type="PRO" id="PR:E7F594"/>
<dbReference type="Proteomes" id="UP000000437">
    <property type="component" value="Chromosome 13"/>
</dbReference>
<dbReference type="Bgee" id="ENSDARG00000078448">
    <property type="expression patterns" value="Expressed in intestine and 16 other cell types or tissues"/>
</dbReference>
<dbReference type="GO" id="GO:0005765">
    <property type="term" value="C:lysosomal membrane"/>
    <property type="evidence" value="ECO:0000250"/>
    <property type="project" value="UniProtKB"/>
</dbReference>
<dbReference type="GO" id="GO:0006914">
    <property type="term" value="P:autophagy"/>
    <property type="evidence" value="ECO:0007669"/>
    <property type="project" value="UniProtKB-KW"/>
</dbReference>
<dbReference type="GO" id="GO:0046849">
    <property type="term" value="P:bone remodeling"/>
    <property type="evidence" value="ECO:0000315"/>
    <property type="project" value="ZFIN"/>
</dbReference>
<dbReference type="GO" id="GO:0045779">
    <property type="term" value="P:negative regulation of bone resorption"/>
    <property type="evidence" value="ECO:0000315"/>
    <property type="project" value="UniProtKB"/>
</dbReference>
<dbReference type="GO" id="GO:0045671">
    <property type="term" value="P:negative regulation of osteoclast differentiation"/>
    <property type="evidence" value="ECO:0000315"/>
    <property type="project" value="UniProtKB"/>
</dbReference>
<dbReference type="GO" id="GO:0150032">
    <property type="term" value="P:positive regulation of protein localization to lysosome"/>
    <property type="evidence" value="ECO:0000250"/>
    <property type="project" value="UniProtKB"/>
</dbReference>
<dbReference type="GO" id="GO:1904263">
    <property type="term" value="P:positive regulation of TORC1 signaling"/>
    <property type="evidence" value="ECO:0000250"/>
    <property type="project" value="UniProtKB"/>
</dbReference>
<dbReference type="GO" id="GO:0010506">
    <property type="term" value="P:regulation of autophagy"/>
    <property type="evidence" value="ECO:0000315"/>
    <property type="project" value="UniProtKB"/>
</dbReference>
<dbReference type="GO" id="GO:0043087">
    <property type="term" value="P:regulation of GTPase activity"/>
    <property type="evidence" value="ECO:0000315"/>
    <property type="project" value="UniProtKB"/>
</dbReference>
<dbReference type="CDD" id="cd21476">
    <property type="entry name" value="7tm_GPR137B"/>
    <property type="match status" value="1"/>
</dbReference>
<dbReference type="InterPro" id="IPR029723">
    <property type="entry name" value="GPR137"/>
</dbReference>
<dbReference type="PANTHER" id="PTHR15146">
    <property type="entry name" value="INTEGRAL MEMBRANE PROTEIN GPR137"/>
    <property type="match status" value="1"/>
</dbReference>
<dbReference type="PANTHER" id="PTHR15146:SF0">
    <property type="entry name" value="INTEGRAL MEMBRANE PROTEIN GPR137B"/>
    <property type="match status" value="1"/>
</dbReference>
<name>G137B_DANRE</name>
<protein>
    <recommendedName>
        <fullName>G protein-coupled receptor 137Ba</fullName>
    </recommendedName>
</protein>
<reference key="1">
    <citation type="journal article" date="2013" name="Nature">
        <title>The zebrafish reference genome sequence and its relationship to the human genome.</title>
        <authorList>
            <person name="Howe K."/>
            <person name="Clark M.D."/>
            <person name="Torroja C.F."/>
            <person name="Torrance J."/>
            <person name="Berthelot C."/>
            <person name="Muffato M."/>
            <person name="Collins J.E."/>
            <person name="Humphray S."/>
            <person name="McLaren K."/>
            <person name="Matthews L."/>
            <person name="McLaren S."/>
            <person name="Sealy I."/>
            <person name="Caccamo M."/>
            <person name="Churcher C."/>
            <person name="Scott C."/>
            <person name="Barrett J.C."/>
            <person name="Koch R."/>
            <person name="Rauch G.J."/>
            <person name="White S."/>
            <person name="Chow W."/>
            <person name="Kilian B."/>
            <person name="Quintais L.T."/>
            <person name="Guerra-Assuncao J.A."/>
            <person name="Zhou Y."/>
            <person name="Gu Y."/>
            <person name="Yen J."/>
            <person name="Vogel J.H."/>
            <person name="Eyre T."/>
            <person name="Redmond S."/>
            <person name="Banerjee R."/>
            <person name="Chi J."/>
            <person name="Fu B."/>
            <person name="Langley E."/>
            <person name="Maguire S.F."/>
            <person name="Laird G.K."/>
            <person name="Lloyd D."/>
            <person name="Kenyon E."/>
            <person name="Donaldson S."/>
            <person name="Sehra H."/>
            <person name="Almeida-King J."/>
            <person name="Loveland J."/>
            <person name="Trevanion S."/>
            <person name="Jones M."/>
            <person name="Quail M."/>
            <person name="Willey D."/>
            <person name="Hunt A."/>
            <person name="Burton J."/>
            <person name="Sims S."/>
            <person name="McLay K."/>
            <person name="Plumb B."/>
            <person name="Davis J."/>
            <person name="Clee C."/>
            <person name="Oliver K."/>
            <person name="Clark R."/>
            <person name="Riddle C."/>
            <person name="Elliot D."/>
            <person name="Threadgold G."/>
            <person name="Harden G."/>
            <person name="Ware D."/>
            <person name="Begum S."/>
            <person name="Mortimore B."/>
            <person name="Kerry G."/>
            <person name="Heath P."/>
            <person name="Phillimore B."/>
            <person name="Tracey A."/>
            <person name="Corby N."/>
            <person name="Dunn M."/>
            <person name="Johnson C."/>
            <person name="Wood J."/>
            <person name="Clark S."/>
            <person name="Pelan S."/>
            <person name="Griffiths G."/>
            <person name="Smith M."/>
            <person name="Glithero R."/>
            <person name="Howden P."/>
            <person name="Barker N."/>
            <person name="Lloyd C."/>
            <person name="Stevens C."/>
            <person name="Harley J."/>
            <person name="Holt K."/>
            <person name="Panagiotidis G."/>
            <person name="Lovell J."/>
            <person name="Beasley H."/>
            <person name="Henderson C."/>
            <person name="Gordon D."/>
            <person name="Auger K."/>
            <person name="Wright D."/>
            <person name="Collins J."/>
            <person name="Raisen C."/>
            <person name="Dyer L."/>
            <person name="Leung K."/>
            <person name="Robertson L."/>
            <person name="Ambridge K."/>
            <person name="Leongamornlert D."/>
            <person name="McGuire S."/>
            <person name="Gilderthorp R."/>
            <person name="Griffiths C."/>
            <person name="Manthravadi D."/>
            <person name="Nichol S."/>
            <person name="Barker G."/>
            <person name="Whitehead S."/>
            <person name="Kay M."/>
            <person name="Brown J."/>
            <person name="Murnane C."/>
            <person name="Gray E."/>
            <person name="Humphries M."/>
            <person name="Sycamore N."/>
            <person name="Barker D."/>
            <person name="Saunders D."/>
            <person name="Wallis J."/>
            <person name="Babbage A."/>
            <person name="Hammond S."/>
            <person name="Mashreghi-Mohammadi M."/>
            <person name="Barr L."/>
            <person name="Martin S."/>
            <person name="Wray P."/>
            <person name="Ellington A."/>
            <person name="Matthews N."/>
            <person name="Ellwood M."/>
            <person name="Woodmansey R."/>
            <person name="Clark G."/>
            <person name="Cooper J."/>
            <person name="Tromans A."/>
            <person name="Grafham D."/>
            <person name="Skuce C."/>
            <person name="Pandian R."/>
            <person name="Andrews R."/>
            <person name="Harrison E."/>
            <person name="Kimberley A."/>
            <person name="Garnett J."/>
            <person name="Fosker N."/>
            <person name="Hall R."/>
            <person name="Garner P."/>
            <person name="Kelly D."/>
            <person name="Bird C."/>
            <person name="Palmer S."/>
            <person name="Gehring I."/>
            <person name="Berger A."/>
            <person name="Dooley C.M."/>
            <person name="Ersan-Urun Z."/>
            <person name="Eser C."/>
            <person name="Geiger H."/>
            <person name="Geisler M."/>
            <person name="Karotki L."/>
            <person name="Kirn A."/>
            <person name="Konantz J."/>
            <person name="Konantz M."/>
            <person name="Oberlander M."/>
            <person name="Rudolph-Geiger S."/>
            <person name="Teucke M."/>
            <person name="Lanz C."/>
            <person name="Raddatz G."/>
            <person name="Osoegawa K."/>
            <person name="Zhu B."/>
            <person name="Rapp A."/>
            <person name="Widaa S."/>
            <person name="Langford C."/>
            <person name="Yang F."/>
            <person name="Schuster S.C."/>
            <person name="Carter N.P."/>
            <person name="Harrow J."/>
            <person name="Ning Z."/>
            <person name="Herrero J."/>
            <person name="Searle S.M."/>
            <person name="Enright A."/>
            <person name="Geisler R."/>
            <person name="Plasterk R.H."/>
            <person name="Lee C."/>
            <person name="Westerfield M."/>
            <person name="de Jong P.J."/>
            <person name="Zon L.I."/>
            <person name="Postlethwait J.H."/>
            <person name="Nusslein-Volhard C."/>
            <person name="Hubbard T.J."/>
            <person name="Roest Crollius H."/>
            <person name="Rogers J."/>
            <person name="Stemple D.L."/>
        </authorList>
    </citation>
    <scope>NUCLEOTIDE SEQUENCE [LARGE SCALE GENOMIC DNA]</scope>
    <source>
        <strain>Tuebingen</strain>
    </source>
</reference>
<reference key="2">
    <citation type="journal article" date="2019" name="Bone">
        <title>A role for G protein-coupled receptor 137b in bone remodeling in mouse and zebrafish.</title>
        <authorList>
            <person name="Urso K."/>
            <person name="Caetano-Lopes J."/>
            <person name="Lee P.Y."/>
            <person name="Yan J."/>
            <person name="Henke K."/>
            <person name="Sury M."/>
            <person name="Liu H."/>
            <person name="Zgoda M."/>
            <person name="Jacome-Galarza C."/>
            <person name="Nigrovic P.A."/>
            <person name="Duryea J."/>
            <person name="Harris M.P."/>
            <person name="Charles J.F."/>
        </authorList>
    </citation>
    <scope>DISRUPTION PHENOTYPE</scope>
    <scope>FUNCTION</scope>
</reference>
<reference key="3">
    <citation type="journal article" date="2019" name="Nat. Cell Biol.">
        <title>The lysosomal GPCR-like protein GPR137B regulates Rag and mTORC1 localization and activity.</title>
        <authorList>
            <person name="Gan L."/>
            <person name="Seki A."/>
            <person name="Shen K."/>
            <person name="Iyer H."/>
            <person name="Han K."/>
            <person name="Hayer A."/>
            <person name="Wollman R."/>
            <person name="Ge X."/>
            <person name="Lin J.R."/>
            <person name="Dey G."/>
            <person name="Talbot W.S."/>
            <person name="Meyer T."/>
        </authorList>
    </citation>
    <scope>DISRUPTION PHENOTYPE</scope>
    <scope>FUNCTION</scope>
</reference>
<feature type="chain" id="PRO_0000448976" description="G protein-coupled receptor 137Ba">
    <location>
        <begin position="1"/>
        <end position="373"/>
    </location>
</feature>
<feature type="topological domain" description="Lumenal" evidence="6">
    <location>
        <begin position="1"/>
        <end position="15"/>
    </location>
</feature>
<feature type="transmembrane region" description="Helical; Name=1" evidence="3">
    <location>
        <begin position="16"/>
        <end position="36"/>
    </location>
</feature>
<feature type="topological domain" description="Cytoplasmic" evidence="6">
    <location>
        <begin position="37"/>
        <end position="55"/>
    </location>
</feature>
<feature type="transmembrane region" description="Helical; Name=2" evidence="3">
    <location>
        <begin position="56"/>
        <end position="76"/>
    </location>
</feature>
<feature type="topological domain" description="Lumenal" evidence="6">
    <location>
        <begin position="77"/>
        <end position="84"/>
    </location>
</feature>
<feature type="transmembrane region" description="Helical; Name=3" evidence="3">
    <location>
        <begin position="85"/>
        <end position="105"/>
    </location>
</feature>
<feature type="topological domain" description="Cytoplasmic" evidence="6">
    <location>
        <begin position="106"/>
        <end position="135"/>
    </location>
</feature>
<feature type="transmembrane region" description="Helical; Name=4" evidence="3">
    <location>
        <begin position="136"/>
        <end position="156"/>
    </location>
</feature>
<feature type="topological domain" description="Lumenal" evidence="6">
    <location>
        <begin position="157"/>
        <end position="176"/>
    </location>
</feature>
<feature type="transmembrane region" description="Helical; Name=5" evidence="3">
    <location>
        <begin position="177"/>
        <end position="197"/>
    </location>
</feature>
<feature type="topological domain" description="Cytoplasmic" evidence="6">
    <location>
        <begin position="198"/>
        <end position="213"/>
    </location>
</feature>
<feature type="transmembrane region" description="Helical; Name=6" evidence="3">
    <location>
        <begin position="214"/>
        <end position="234"/>
    </location>
</feature>
<feature type="topological domain" description="Lumenal" evidence="6">
    <location>
        <begin position="235"/>
        <end position="268"/>
    </location>
</feature>
<feature type="transmembrane region" description="Helical; Name=7" evidence="3">
    <location>
        <begin position="269"/>
        <end position="289"/>
    </location>
</feature>
<feature type="topological domain" description="Cytoplasmic" evidence="6">
    <location>
        <begin position="290"/>
        <end position="373"/>
    </location>
</feature>
<gene>
    <name evidence="7" type="primary">gpr137ba</name>
</gene>
<accession>E7F594</accession>
<evidence type="ECO:0000250" key="1">
    <source>
        <dbReference type="UniProtKB" id="O60478"/>
    </source>
</evidence>
<evidence type="ECO:0000250" key="2">
    <source>
        <dbReference type="UniProtKB" id="Q8BNQ3"/>
    </source>
</evidence>
<evidence type="ECO:0000255" key="3"/>
<evidence type="ECO:0000269" key="4">
    <source>
    </source>
</evidence>
<evidence type="ECO:0000269" key="5">
    <source>
    </source>
</evidence>
<evidence type="ECO:0000305" key="6"/>
<evidence type="ECO:0000312" key="7">
    <source>
        <dbReference type="ZFIN" id="ZDB-GENE-100721-1"/>
    </source>
</evidence>
<organism>
    <name type="scientific">Danio rerio</name>
    <name type="common">Zebrafish</name>
    <name type="synonym">Brachydanio rerio</name>
    <dbReference type="NCBI Taxonomy" id="7955"/>
    <lineage>
        <taxon>Eukaryota</taxon>
        <taxon>Metazoa</taxon>
        <taxon>Chordata</taxon>
        <taxon>Craniata</taxon>
        <taxon>Vertebrata</taxon>
        <taxon>Euteleostomi</taxon>
        <taxon>Actinopterygii</taxon>
        <taxon>Neopterygii</taxon>
        <taxon>Teleostei</taxon>
        <taxon>Ostariophysi</taxon>
        <taxon>Cypriniformes</taxon>
        <taxon>Danionidae</taxon>
        <taxon>Danioninae</taxon>
        <taxon>Danio</taxon>
    </lineage>
</organism>
<keyword id="KW-0072">Autophagy</keyword>
<keyword id="KW-0458">Lysosome</keyword>
<keyword id="KW-0472">Membrane</keyword>
<keyword id="KW-1185">Reference proteome</keyword>
<keyword id="KW-0812">Transmembrane</keyword>
<keyword id="KW-1133">Transmembrane helix</keyword>
<proteinExistence type="inferred from homology"/>
<comment type="function">
    <text evidence="1 2 4 5">Lysosomal integral membrane protein that regulates the localization and activity of mTORC1, a signaling complex promoting cell growth in response to growth factors, energy levels, and amino acids (By similarity). Interacts with Rag GTPases and increases the lysosomial localization and activity of Rag GTPases and thereby regulates mTORC1 translocation and activity in lysosome (PubMed:31036939). Also acts as a negative regulator of osteoclast activity (PubMed:31173907). May be involved in interleukin-4-induced M2 macrophage polarization (By similarity).</text>
</comment>
<comment type="function">
    <text evidence="2 5">Also acts as a negative regulator of osteoclast activity (PubMed:31173907). May be involved in interleukin-4-induced M2 macrophage polarization (By similarity).</text>
</comment>
<comment type="subcellular location">
    <subcellularLocation>
        <location evidence="1">Lysosome membrane</location>
        <topology evidence="3">Multi-pass membrane protein</topology>
    </subcellularLocation>
</comment>
<comment type="disruption phenotype">
    <text evidence="4 5">Knockout zebrafish are viable and fertile and display no obvious morphological defects as adults (PubMed:31036939, PubMed:31173907). However deficient zebrafish have abnormal microglial with expended lysosomes (PubMed:31036939). They also display increased bone resorption (PubMed:31173907).</text>
</comment>
<comment type="similarity">
    <text evidence="6">Belongs to the GPR137 family.</text>
</comment>
<sequence length="373" mass="42892">MQKDSLPTLSPAVPPYVMLGLTVAYTIFYCLLFVFVYVQLWLVLRYRHKRFSYQTVFLFLCLLWAALRALLFSFYFKNCVTANTLGPFCFWLLYCFPVCLQFFTLSLMNLYFAQVIFKAKSKYSPELQKYRLPLYLLFLSISLLFLLVNLTCALLVKINRANTETVVLVRVTVNDSLFVLCAVSLSLCLYRIAKMSLANIYLEAKGTSVCQVTLIGVTVVLLYSSRACYNLVVLALTKIKSINSFDYDWYNVSDQADLKSTLGDAGYVVFGVILFVWELLPTSLVVYFFRVRKPTLDRSASVIPGHMFSSRAYFFDNPRRYDSDDDLAWSIIPQNIQASFTSDSYDWSCRNNSFTAYTEAEESHLAPEELNPY</sequence>